<evidence type="ECO:0000255" key="1">
    <source>
        <dbReference type="HAMAP-Rule" id="MF_01953"/>
    </source>
</evidence>
<feature type="chain" id="PRO_0000234175" description="Urease subunit alpha">
    <location>
        <begin position="1"/>
        <end position="571"/>
    </location>
</feature>
<feature type="domain" description="Urease" evidence="1">
    <location>
        <begin position="129"/>
        <end position="571"/>
    </location>
</feature>
<feature type="active site" description="Proton donor" evidence="1">
    <location>
        <position position="320"/>
    </location>
</feature>
<feature type="binding site" evidence="1">
    <location>
        <position position="134"/>
    </location>
    <ligand>
        <name>Ni(2+)</name>
        <dbReference type="ChEBI" id="CHEBI:49786"/>
        <label>1</label>
    </ligand>
</feature>
<feature type="binding site" evidence="1">
    <location>
        <position position="136"/>
    </location>
    <ligand>
        <name>Ni(2+)</name>
        <dbReference type="ChEBI" id="CHEBI:49786"/>
        <label>1</label>
    </ligand>
</feature>
<feature type="binding site" description="via carbamate group" evidence="1">
    <location>
        <position position="217"/>
    </location>
    <ligand>
        <name>Ni(2+)</name>
        <dbReference type="ChEBI" id="CHEBI:49786"/>
        <label>1</label>
    </ligand>
</feature>
<feature type="binding site" description="via carbamate group" evidence="1">
    <location>
        <position position="217"/>
    </location>
    <ligand>
        <name>Ni(2+)</name>
        <dbReference type="ChEBI" id="CHEBI:49786"/>
        <label>2</label>
    </ligand>
</feature>
<feature type="binding site" evidence="1">
    <location>
        <position position="219"/>
    </location>
    <ligand>
        <name>substrate</name>
    </ligand>
</feature>
<feature type="binding site" evidence="1">
    <location>
        <position position="246"/>
    </location>
    <ligand>
        <name>Ni(2+)</name>
        <dbReference type="ChEBI" id="CHEBI:49786"/>
        <label>2</label>
    </ligand>
</feature>
<feature type="binding site" evidence="1">
    <location>
        <position position="272"/>
    </location>
    <ligand>
        <name>Ni(2+)</name>
        <dbReference type="ChEBI" id="CHEBI:49786"/>
        <label>2</label>
    </ligand>
</feature>
<feature type="binding site" evidence="1">
    <location>
        <position position="360"/>
    </location>
    <ligand>
        <name>Ni(2+)</name>
        <dbReference type="ChEBI" id="CHEBI:49786"/>
        <label>1</label>
    </ligand>
</feature>
<feature type="modified residue" description="N6-carboxylysine" evidence="1">
    <location>
        <position position="217"/>
    </location>
</feature>
<protein>
    <recommendedName>
        <fullName evidence="1">Urease subunit alpha</fullName>
        <ecNumber evidence="1">3.5.1.5</ecNumber>
    </recommendedName>
    <alternativeName>
        <fullName evidence="1">Urea amidohydrolase subunit alpha</fullName>
    </alternativeName>
</protein>
<organism>
    <name type="scientific">Cupriavidus pinatubonensis (strain JMP 134 / LMG 1197)</name>
    <name type="common">Cupriavidus necator (strain JMP 134)</name>
    <dbReference type="NCBI Taxonomy" id="264198"/>
    <lineage>
        <taxon>Bacteria</taxon>
        <taxon>Pseudomonadati</taxon>
        <taxon>Pseudomonadota</taxon>
        <taxon>Betaproteobacteria</taxon>
        <taxon>Burkholderiales</taxon>
        <taxon>Burkholderiaceae</taxon>
        <taxon>Cupriavidus</taxon>
    </lineage>
</organism>
<comment type="catalytic activity">
    <reaction evidence="1">
        <text>urea + 2 H2O + H(+) = hydrogencarbonate + 2 NH4(+)</text>
        <dbReference type="Rhea" id="RHEA:20557"/>
        <dbReference type="ChEBI" id="CHEBI:15377"/>
        <dbReference type="ChEBI" id="CHEBI:15378"/>
        <dbReference type="ChEBI" id="CHEBI:16199"/>
        <dbReference type="ChEBI" id="CHEBI:17544"/>
        <dbReference type="ChEBI" id="CHEBI:28938"/>
        <dbReference type="EC" id="3.5.1.5"/>
    </reaction>
</comment>
<comment type="cofactor">
    <cofactor evidence="1">
        <name>Ni cation</name>
        <dbReference type="ChEBI" id="CHEBI:25516"/>
    </cofactor>
    <text evidence="1">Binds 2 nickel ions per subunit.</text>
</comment>
<comment type="pathway">
    <text evidence="1">Nitrogen metabolism; urea degradation; CO(2) and NH(3) from urea (urease route): step 1/1.</text>
</comment>
<comment type="subunit">
    <text evidence="1">Heterotrimer of UreA (gamma), UreB (beta) and UreC (alpha) subunits. Three heterotrimers associate to form the active enzyme.</text>
</comment>
<comment type="subcellular location">
    <subcellularLocation>
        <location evidence="1">Cytoplasm</location>
    </subcellularLocation>
</comment>
<comment type="PTM">
    <text evidence="1">Carboxylation allows a single lysine to coordinate two nickel ions.</text>
</comment>
<comment type="similarity">
    <text evidence="1">Belongs to the metallo-dependent hydrolases superfamily. Urease alpha subunit family.</text>
</comment>
<dbReference type="EC" id="3.5.1.5" evidence="1"/>
<dbReference type="EMBL" id="CP000090">
    <property type="protein sequence ID" value="AAZ60374.1"/>
    <property type="molecule type" value="Genomic_DNA"/>
</dbReference>
<dbReference type="SMR" id="Q473Q9"/>
<dbReference type="STRING" id="264198.Reut_A0995"/>
<dbReference type="KEGG" id="reu:Reut_A0995"/>
<dbReference type="eggNOG" id="COG0804">
    <property type="taxonomic scope" value="Bacteria"/>
</dbReference>
<dbReference type="HOGENOM" id="CLU_000980_0_0_4"/>
<dbReference type="OrthoDB" id="9802793at2"/>
<dbReference type="UniPathway" id="UPA00258">
    <property type="reaction ID" value="UER00370"/>
</dbReference>
<dbReference type="GO" id="GO:0005737">
    <property type="term" value="C:cytoplasm"/>
    <property type="evidence" value="ECO:0007669"/>
    <property type="project" value="UniProtKB-SubCell"/>
</dbReference>
<dbReference type="GO" id="GO:0016151">
    <property type="term" value="F:nickel cation binding"/>
    <property type="evidence" value="ECO:0007669"/>
    <property type="project" value="UniProtKB-UniRule"/>
</dbReference>
<dbReference type="GO" id="GO:0009039">
    <property type="term" value="F:urease activity"/>
    <property type="evidence" value="ECO:0007669"/>
    <property type="project" value="UniProtKB-UniRule"/>
</dbReference>
<dbReference type="GO" id="GO:0043419">
    <property type="term" value="P:urea catabolic process"/>
    <property type="evidence" value="ECO:0007669"/>
    <property type="project" value="UniProtKB-UniRule"/>
</dbReference>
<dbReference type="CDD" id="cd00375">
    <property type="entry name" value="Urease_alpha"/>
    <property type="match status" value="1"/>
</dbReference>
<dbReference type="Gene3D" id="3.20.20.140">
    <property type="entry name" value="Metal-dependent hydrolases"/>
    <property type="match status" value="1"/>
</dbReference>
<dbReference type="Gene3D" id="2.30.40.10">
    <property type="entry name" value="Urease, subunit C, domain 1"/>
    <property type="match status" value="1"/>
</dbReference>
<dbReference type="HAMAP" id="MF_01953">
    <property type="entry name" value="Urease_alpha"/>
    <property type="match status" value="1"/>
</dbReference>
<dbReference type="InterPro" id="IPR006680">
    <property type="entry name" value="Amidohydro-rel"/>
</dbReference>
<dbReference type="InterPro" id="IPR011059">
    <property type="entry name" value="Metal-dep_hydrolase_composite"/>
</dbReference>
<dbReference type="InterPro" id="IPR032466">
    <property type="entry name" value="Metal_Hydrolase"/>
</dbReference>
<dbReference type="InterPro" id="IPR011612">
    <property type="entry name" value="Urease_alpha_N_dom"/>
</dbReference>
<dbReference type="InterPro" id="IPR050112">
    <property type="entry name" value="Urease_alpha_subunit"/>
</dbReference>
<dbReference type="InterPro" id="IPR017950">
    <property type="entry name" value="Urease_AS"/>
</dbReference>
<dbReference type="InterPro" id="IPR005848">
    <property type="entry name" value="Urease_asu"/>
</dbReference>
<dbReference type="InterPro" id="IPR017951">
    <property type="entry name" value="Urease_asu_c"/>
</dbReference>
<dbReference type="InterPro" id="IPR029754">
    <property type="entry name" value="Urease_Ni-bd"/>
</dbReference>
<dbReference type="NCBIfam" id="NF009685">
    <property type="entry name" value="PRK13206.1"/>
    <property type="match status" value="1"/>
</dbReference>
<dbReference type="NCBIfam" id="NF009686">
    <property type="entry name" value="PRK13207.1"/>
    <property type="match status" value="1"/>
</dbReference>
<dbReference type="NCBIfam" id="TIGR01792">
    <property type="entry name" value="urease_alph"/>
    <property type="match status" value="1"/>
</dbReference>
<dbReference type="PANTHER" id="PTHR43440">
    <property type="entry name" value="UREASE"/>
    <property type="match status" value="1"/>
</dbReference>
<dbReference type="PANTHER" id="PTHR43440:SF1">
    <property type="entry name" value="UREASE"/>
    <property type="match status" value="1"/>
</dbReference>
<dbReference type="Pfam" id="PF01979">
    <property type="entry name" value="Amidohydro_1"/>
    <property type="match status" value="1"/>
</dbReference>
<dbReference type="Pfam" id="PF00449">
    <property type="entry name" value="Urease_alpha"/>
    <property type="match status" value="1"/>
</dbReference>
<dbReference type="PRINTS" id="PR01752">
    <property type="entry name" value="UREASE"/>
</dbReference>
<dbReference type="SUPFAM" id="SSF51338">
    <property type="entry name" value="Composite domain of metallo-dependent hydrolases"/>
    <property type="match status" value="2"/>
</dbReference>
<dbReference type="SUPFAM" id="SSF51556">
    <property type="entry name" value="Metallo-dependent hydrolases"/>
    <property type="match status" value="1"/>
</dbReference>
<dbReference type="PROSITE" id="PS01120">
    <property type="entry name" value="UREASE_1"/>
    <property type="match status" value="1"/>
</dbReference>
<dbReference type="PROSITE" id="PS00145">
    <property type="entry name" value="UREASE_2"/>
    <property type="match status" value="1"/>
</dbReference>
<dbReference type="PROSITE" id="PS51368">
    <property type="entry name" value="UREASE_3"/>
    <property type="match status" value="1"/>
</dbReference>
<reference key="1">
    <citation type="journal article" date="2010" name="PLoS ONE">
        <title>The complete multipartite genome sequence of Cupriavidus necator JMP134, a versatile pollutant degrader.</title>
        <authorList>
            <person name="Lykidis A."/>
            <person name="Perez-Pantoja D."/>
            <person name="Ledger T."/>
            <person name="Mavromatis K."/>
            <person name="Anderson I.J."/>
            <person name="Ivanova N.N."/>
            <person name="Hooper S.D."/>
            <person name="Lapidus A."/>
            <person name="Lucas S."/>
            <person name="Gonzalez B."/>
            <person name="Kyrpides N.C."/>
        </authorList>
    </citation>
    <scope>NUCLEOTIDE SEQUENCE [LARGE SCALE GENOMIC DNA]</scope>
    <source>
        <strain>JMP134 / LMG 1197</strain>
    </source>
</reference>
<accession>Q473Q9</accession>
<keyword id="KW-0963">Cytoplasm</keyword>
<keyword id="KW-0378">Hydrolase</keyword>
<keyword id="KW-0479">Metal-binding</keyword>
<keyword id="KW-0533">Nickel</keyword>
<name>URE1_CUPPJ</name>
<gene>
    <name evidence="1" type="primary">ureC</name>
    <name type="ordered locus">Reut_A0995</name>
</gene>
<proteinExistence type="inferred from homology"/>
<sequence length="571" mass="60859">MVKISRQAYAEMFGPTTGDRVRLADTGLVIEVEKDFTIYGEEVKFGGGKVIRDGMGQSQRMAKDCVDTVITNALIVDHWGIVKADIGLKGGRIAAIGKAGNPDIQPGVTIVVGPGTEVIAGEGMIVTAGGIDTHIHFICPQQIEEALMSGVTTMIGGGTGPATGTFATTVTPGPWYMERMLQAIEAYPMNIGLLGKGNASQQAPILEQVEAGAIGLKLHEDWGTTPAAIDTCLSVADATDTQVAIHTDTLNEAGFVEATIAAFKGRTIHTYHTEGAGGGHAPDIIKVCGEANVLPSSTNPTRPYTVNTLDEHLDMLMVCHHLDPAIAEDIAFAESRIRRETIAAEDILHDLGAFSMISSDSQAMGRVGEVIIRTWQTAHKMAAQRGKLPGDPNDARGGHDNFRVKRYIAKYTINPALTHGIAHEVGSIEVGKWADLVLWRPACFGVKPSLILKGGMIAAAAMGDPNASIPTPQPVHYRPMFASAGGALHKSSLTFVSQAALAANVGERYGLAKTLSAVRGTRTVSKRDMVHNDWQPHVTVDPETYQVVADGQLLMCDPATELPMAQRYFLF</sequence>